<proteinExistence type="inferred from homology"/>
<organism>
    <name type="scientific">Clostridium perfringens (strain ATCC 13124 / DSM 756 / JCM 1290 / NCIMB 6125 / NCTC 8237 / Type A)</name>
    <dbReference type="NCBI Taxonomy" id="195103"/>
    <lineage>
        <taxon>Bacteria</taxon>
        <taxon>Bacillati</taxon>
        <taxon>Bacillota</taxon>
        <taxon>Clostridia</taxon>
        <taxon>Eubacteriales</taxon>
        <taxon>Clostridiaceae</taxon>
        <taxon>Clostridium</taxon>
    </lineage>
</organism>
<reference key="1">
    <citation type="journal article" date="2006" name="Genome Res.">
        <title>Skewed genomic variability in strains of the toxigenic bacterial pathogen, Clostridium perfringens.</title>
        <authorList>
            <person name="Myers G.S.A."/>
            <person name="Rasko D.A."/>
            <person name="Cheung J.K."/>
            <person name="Ravel J."/>
            <person name="Seshadri R."/>
            <person name="DeBoy R.T."/>
            <person name="Ren Q."/>
            <person name="Varga J."/>
            <person name="Awad M.M."/>
            <person name="Brinkac L.M."/>
            <person name="Daugherty S.C."/>
            <person name="Haft D.H."/>
            <person name="Dodson R.J."/>
            <person name="Madupu R."/>
            <person name="Nelson W.C."/>
            <person name="Rosovitz M.J."/>
            <person name="Sullivan S.A."/>
            <person name="Khouri H."/>
            <person name="Dimitrov G.I."/>
            <person name="Watkins K.L."/>
            <person name="Mulligan S."/>
            <person name="Benton J."/>
            <person name="Radune D."/>
            <person name="Fisher D.J."/>
            <person name="Atkins H.S."/>
            <person name="Hiscox T."/>
            <person name="Jost B.H."/>
            <person name="Billington S.J."/>
            <person name="Songer J.G."/>
            <person name="McClane B.A."/>
            <person name="Titball R.W."/>
            <person name="Rood J.I."/>
            <person name="Melville S.B."/>
            <person name="Paulsen I.T."/>
        </authorList>
    </citation>
    <scope>NUCLEOTIDE SEQUENCE [LARGE SCALE GENOMIC DNA]</scope>
    <source>
        <strain>ATCC 13124 / DSM 756 / JCM 1290 / NCIMB 6125 / NCTC 8237 / S 107 / Type A</strain>
    </source>
</reference>
<keyword id="KW-0963">Cytoplasm</keyword>
<keyword id="KW-0378">Hydrolase</keyword>
<keyword id="KW-0540">Nuclease</keyword>
<keyword id="KW-0690">Ribosome biogenesis</keyword>
<evidence type="ECO:0000255" key="1">
    <source>
        <dbReference type="HAMAP-Rule" id="MF_00651"/>
    </source>
</evidence>
<comment type="function">
    <text evidence="1">Could be a nuclease involved in processing of the 5'-end of pre-16S rRNA.</text>
</comment>
<comment type="subcellular location">
    <subcellularLocation>
        <location evidence="1">Cytoplasm</location>
    </subcellularLocation>
</comment>
<comment type="similarity">
    <text evidence="1">Belongs to the YqgF nuclease family.</text>
</comment>
<feature type="chain" id="PRO_0000257521" description="Putative pre-16S rRNA nuclease">
    <location>
        <begin position="1"/>
        <end position="137"/>
    </location>
</feature>
<gene>
    <name type="ordered locus">CPF_2031</name>
</gene>
<protein>
    <recommendedName>
        <fullName evidence="1">Putative pre-16S rRNA nuclease</fullName>
        <ecNumber evidence="1">3.1.-.-</ecNumber>
    </recommendedName>
</protein>
<sequence>MRILGLDIGSKTIGVAVSDPLGWTAQGVTTIKRDCYTKDVEAVMKICKEYGVETIVAGMPKNMNGTIGPSGEMVKNLCEQIEKSFDGKIEFWDERLTTVAAHRAMLEADLSRAKRKKIVDKIAATYILQGYLDRISK</sequence>
<dbReference type="EC" id="3.1.-.-" evidence="1"/>
<dbReference type="EMBL" id="CP000246">
    <property type="protein sequence ID" value="ABG82724.1"/>
    <property type="molecule type" value="Genomic_DNA"/>
</dbReference>
<dbReference type="SMR" id="Q0TPH6"/>
<dbReference type="STRING" id="195103.CPF_2031"/>
<dbReference type="PaxDb" id="195103-CPF_2031"/>
<dbReference type="KEGG" id="cpf:CPF_2031"/>
<dbReference type="eggNOG" id="COG0816">
    <property type="taxonomic scope" value="Bacteria"/>
</dbReference>
<dbReference type="HOGENOM" id="CLU_098240_2_0_9"/>
<dbReference type="Proteomes" id="UP000001823">
    <property type="component" value="Chromosome"/>
</dbReference>
<dbReference type="GO" id="GO:0005829">
    <property type="term" value="C:cytosol"/>
    <property type="evidence" value="ECO:0007669"/>
    <property type="project" value="TreeGrafter"/>
</dbReference>
<dbReference type="GO" id="GO:0004518">
    <property type="term" value="F:nuclease activity"/>
    <property type="evidence" value="ECO:0007669"/>
    <property type="project" value="UniProtKB-KW"/>
</dbReference>
<dbReference type="GO" id="GO:0000967">
    <property type="term" value="P:rRNA 5'-end processing"/>
    <property type="evidence" value="ECO:0007669"/>
    <property type="project" value="UniProtKB-UniRule"/>
</dbReference>
<dbReference type="CDD" id="cd16964">
    <property type="entry name" value="YqgF"/>
    <property type="match status" value="1"/>
</dbReference>
<dbReference type="Gene3D" id="3.30.420.140">
    <property type="entry name" value="YqgF/RNase H-like domain"/>
    <property type="match status" value="1"/>
</dbReference>
<dbReference type="HAMAP" id="MF_00651">
    <property type="entry name" value="Nuclease_YqgF"/>
    <property type="match status" value="1"/>
</dbReference>
<dbReference type="InterPro" id="IPR012337">
    <property type="entry name" value="RNaseH-like_sf"/>
</dbReference>
<dbReference type="InterPro" id="IPR005227">
    <property type="entry name" value="YqgF"/>
</dbReference>
<dbReference type="InterPro" id="IPR006641">
    <property type="entry name" value="YqgF/RNaseH-like_dom"/>
</dbReference>
<dbReference type="InterPro" id="IPR037027">
    <property type="entry name" value="YqgF/RNaseH-like_dom_sf"/>
</dbReference>
<dbReference type="NCBIfam" id="TIGR00250">
    <property type="entry name" value="RNAse_H_YqgF"/>
    <property type="match status" value="1"/>
</dbReference>
<dbReference type="PANTHER" id="PTHR33317">
    <property type="entry name" value="POLYNUCLEOTIDYL TRANSFERASE, RIBONUCLEASE H-LIKE SUPERFAMILY PROTEIN"/>
    <property type="match status" value="1"/>
</dbReference>
<dbReference type="PANTHER" id="PTHR33317:SF4">
    <property type="entry name" value="POLYNUCLEOTIDYL TRANSFERASE, RIBONUCLEASE H-LIKE SUPERFAMILY PROTEIN"/>
    <property type="match status" value="1"/>
</dbReference>
<dbReference type="Pfam" id="PF03652">
    <property type="entry name" value="RuvX"/>
    <property type="match status" value="1"/>
</dbReference>
<dbReference type="SMART" id="SM00732">
    <property type="entry name" value="YqgFc"/>
    <property type="match status" value="1"/>
</dbReference>
<dbReference type="SUPFAM" id="SSF53098">
    <property type="entry name" value="Ribonuclease H-like"/>
    <property type="match status" value="1"/>
</dbReference>
<name>YQGF_CLOP1</name>
<accession>Q0TPH6</accession>